<evidence type="ECO:0000255" key="1">
    <source>
        <dbReference type="HAMAP-Rule" id="MF_01345"/>
    </source>
</evidence>
<evidence type="ECO:0000305" key="2"/>
<accession>A0PXV5</accession>
<protein>
    <recommendedName>
        <fullName evidence="1">Small ribosomal subunit protein uS17</fullName>
    </recommendedName>
    <alternativeName>
        <fullName evidence="2">30S ribosomal protein S17</fullName>
    </alternativeName>
</protein>
<sequence length="84" mass="9956">MERSNRKTRIGRVVSDKMEKTIVVAVEGKVRHPLYGKTINRSKKFKVHDENNEARINDRVLIMETRPLSKDKRWRLVQIVEKAK</sequence>
<name>RS17_CLONN</name>
<comment type="function">
    <text evidence="1">One of the primary rRNA binding proteins, it binds specifically to the 5'-end of 16S ribosomal RNA.</text>
</comment>
<comment type="subunit">
    <text evidence="1">Part of the 30S ribosomal subunit.</text>
</comment>
<comment type="similarity">
    <text evidence="1">Belongs to the universal ribosomal protein uS17 family.</text>
</comment>
<organism>
    <name type="scientific">Clostridium novyi (strain NT)</name>
    <dbReference type="NCBI Taxonomy" id="386415"/>
    <lineage>
        <taxon>Bacteria</taxon>
        <taxon>Bacillati</taxon>
        <taxon>Bacillota</taxon>
        <taxon>Clostridia</taxon>
        <taxon>Eubacteriales</taxon>
        <taxon>Clostridiaceae</taxon>
        <taxon>Clostridium</taxon>
    </lineage>
</organism>
<keyword id="KW-1185">Reference proteome</keyword>
<keyword id="KW-0687">Ribonucleoprotein</keyword>
<keyword id="KW-0689">Ribosomal protein</keyword>
<keyword id="KW-0694">RNA-binding</keyword>
<keyword id="KW-0699">rRNA-binding</keyword>
<reference key="1">
    <citation type="journal article" date="2006" name="Nat. Biotechnol.">
        <title>The genome and transcriptomes of the anti-tumor agent Clostridium novyi-NT.</title>
        <authorList>
            <person name="Bettegowda C."/>
            <person name="Huang X."/>
            <person name="Lin J."/>
            <person name="Cheong I."/>
            <person name="Kohli M."/>
            <person name="Szabo S.A."/>
            <person name="Zhang X."/>
            <person name="Diaz L.A. Jr."/>
            <person name="Velculescu V.E."/>
            <person name="Parmigiani G."/>
            <person name="Kinzler K.W."/>
            <person name="Vogelstein B."/>
            <person name="Zhou S."/>
        </authorList>
    </citation>
    <scope>NUCLEOTIDE SEQUENCE [LARGE SCALE GENOMIC DNA]</scope>
    <source>
        <strain>NT</strain>
    </source>
</reference>
<proteinExistence type="inferred from homology"/>
<gene>
    <name evidence="1" type="primary">rpsQ</name>
    <name type="ordered locus">NT01CX_1124</name>
</gene>
<dbReference type="EMBL" id="CP000382">
    <property type="protein sequence ID" value="ABK62187.1"/>
    <property type="molecule type" value="Genomic_DNA"/>
</dbReference>
<dbReference type="RefSeq" id="WP_003367863.1">
    <property type="nucleotide sequence ID" value="NC_008593.1"/>
</dbReference>
<dbReference type="SMR" id="A0PXV5"/>
<dbReference type="STRING" id="386415.NT01CX_1124"/>
<dbReference type="KEGG" id="cno:NT01CX_1124"/>
<dbReference type="eggNOG" id="COG0186">
    <property type="taxonomic scope" value="Bacteria"/>
</dbReference>
<dbReference type="HOGENOM" id="CLU_073626_1_0_9"/>
<dbReference type="Proteomes" id="UP000008220">
    <property type="component" value="Chromosome"/>
</dbReference>
<dbReference type="GO" id="GO:0022627">
    <property type="term" value="C:cytosolic small ribosomal subunit"/>
    <property type="evidence" value="ECO:0007669"/>
    <property type="project" value="TreeGrafter"/>
</dbReference>
<dbReference type="GO" id="GO:0019843">
    <property type="term" value="F:rRNA binding"/>
    <property type="evidence" value="ECO:0007669"/>
    <property type="project" value="UniProtKB-UniRule"/>
</dbReference>
<dbReference type="GO" id="GO:0003735">
    <property type="term" value="F:structural constituent of ribosome"/>
    <property type="evidence" value="ECO:0007669"/>
    <property type="project" value="InterPro"/>
</dbReference>
<dbReference type="GO" id="GO:0006412">
    <property type="term" value="P:translation"/>
    <property type="evidence" value="ECO:0007669"/>
    <property type="project" value="UniProtKB-UniRule"/>
</dbReference>
<dbReference type="CDD" id="cd00364">
    <property type="entry name" value="Ribosomal_uS17"/>
    <property type="match status" value="1"/>
</dbReference>
<dbReference type="Gene3D" id="2.40.50.140">
    <property type="entry name" value="Nucleic acid-binding proteins"/>
    <property type="match status" value="1"/>
</dbReference>
<dbReference type="HAMAP" id="MF_01345_B">
    <property type="entry name" value="Ribosomal_uS17_B"/>
    <property type="match status" value="1"/>
</dbReference>
<dbReference type="InterPro" id="IPR012340">
    <property type="entry name" value="NA-bd_OB-fold"/>
</dbReference>
<dbReference type="InterPro" id="IPR000266">
    <property type="entry name" value="Ribosomal_uS17"/>
</dbReference>
<dbReference type="InterPro" id="IPR019984">
    <property type="entry name" value="Ribosomal_uS17_bact/chlr"/>
</dbReference>
<dbReference type="NCBIfam" id="NF004123">
    <property type="entry name" value="PRK05610.1"/>
    <property type="match status" value="1"/>
</dbReference>
<dbReference type="NCBIfam" id="TIGR03635">
    <property type="entry name" value="uS17_bact"/>
    <property type="match status" value="1"/>
</dbReference>
<dbReference type="PANTHER" id="PTHR10744">
    <property type="entry name" value="40S RIBOSOMAL PROTEIN S11 FAMILY MEMBER"/>
    <property type="match status" value="1"/>
</dbReference>
<dbReference type="PANTHER" id="PTHR10744:SF1">
    <property type="entry name" value="SMALL RIBOSOMAL SUBUNIT PROTEIN US17M"/>
    <property type="match status" value="1"/>
</dbReference>
<dbReference type="Pfam" id="PF00366">
    <property type="entry name" value="Ribosomal_S17"/>
    <property type="match status" value="1"/>
</dbReference>
<dbReference type="PRINTS" id="PR00973">
    <property type="entry name" value="RIBOSOMALS17"/>
</dbReference>
<dbReference type="SUPFAM" id="SSF50249">
    <property type="entry name" value="Nucleic acid-binding proteins"/>
    <property type="match status" value="1"/>
</dbReference>
<feature type="chain" id="PRO_1000054942" description="Small ribosomal subunit protein uS17">
    <location>
        <begin position="1"/>
        <end position="84"/>
    </location>
</feature>